<gene>
    <name evidence="1" type="primary">rplU</name>
    <name type="ordered locus">MMAR_3767</name>
</gene>
<organism>
    <name type="scientific">Mycobacterium marinum (strain ATCC BAA-535 / M)</name>
    <dbReference type="NCBI Taxonomy" id="216594"/>
    <lineage>
        <taxon>Bacteria</taxon>
        <taxon>Bacillati</taxon>
        <taxon>Actinomycetota</taxon>
        <taxon>Actinomycetes</taxon>
        <taxon>Mycobacteriales</taxon>
        <taxon>Mycobacteriaceae</taxon>
        <taxon>Mycobacterium</taxon>
        <taxon>Mycobacterium ulcerans group</taxon>
    </lineage>
</organism>
<protein>
    <recommendedName>
        <fullName evidence="1">Large ribosomal subunit protein bL21</fullName>
    </recommendedName>
    <alternativeName>
        <fullName evidence="2">50S ribosomal protein L21</fullName>
    </alternativeName>
</protein>
<proteinExistence type="inferred from homology"/>
<sequence length="103" mass="11001">MATYAIVKTGGKQYKVAVGDVVKVEKLESEPGAKVSLPVALVVDGAAVTSDADALAKVAVTGEVLEHVKGPKIRIHKFKNKTGYHKRQGHRQQLTVLKVTGIK</sequence>
<name>RL21_MYCMM</name>
<feature type="chain" id="PRO_1000143825" description="Large ribosomal subunit protein bL21">
    <location>
        <begin position="1"/>
        <end position="103"/>
    </location>
</feature>
<accession>B2HMG3</accession>
<reference key="1">
    <citation type="journal article" date="2008" name="Genome Res.">
        <title>Insights from the complete genome sequence of Mycobacterium marinum on the evolution of Mycobacterium tuberculosis.</title>
        <authorList>
            <person name="Stinear T.P."/>
            <person name="Seemann T."/>
            <person name="Harrison P.F."/>
            <person name="Jenkin G.A."/>
            <person name="Davies J.K."/>
            <person name="Johnson P.D."/>
            <person name="Abdellah Z."/>
            <person name="Arrowsmith C."/>
            <person name="Chillingworth T."/>
            <person name="Churcher C."/>
            <person name="Clarke K."/>
            <person name="Cronin A."/>
            <person name="Davis P."/>
            <person name="Goodhead I."/>
            <person name="Holroyd N."/>
            <person name="Jagels K."/>
            <person name="Lord A."/>
            <person name="Moule S."/>
            <person name="Mungall K."/>
            <person name="Norbertczak H."/>
            <person name="Quail M.A."/>
            <person name="Rabbinowitsch E."/>
            <person name="Walker D."/>
            <person name="White B."/>
            <person name="Whitehead S."/>
            <person name="Small P.L."/>
            <person name="Brosch R."/>
            <person name="Ramakrishnan L."/>
            <person name="Fischbach M.A."/>
            <person name="Parkhill J."/>
            <person name="Cole S.T."/>
        </authorList>
    </citation>
    <scope>NUCLEOTIDE SEQUENCE [LARGE SCALE GENOMIC DNA]</scope>
    <source>
        <strain>ATCC BAA-535 / M</strain>
    </source>
</reference>
<keyword id="KW-1185">Reference proteome</keyword>
<keyword id="KW-0687">Ribonucleoprotein</keyword>
<keyword id="KW-0689">Ribosomal protein</keyword>
<keyword id="KW-0694">RNA-binding</keyword>
<keyword id="KW-0699">rRNA-binding</keyword>
<comment type="function">
    <text evidence="1">This protein binds to 23S rRNA in the presence of protein L20.</text>
</comment>
<comment type="subunit">
    <text evidence="1">Part of the 50S ribosomal subunit. Contacts protein L20.</text>
</comment>
<comment type="similarity">
    <text evidence="1">Belongs to the bacterial ribosomal protein bL21 family.</text>
</comment>
<evidence type="ECO:0000255" key="1">
    <source>
        <dbReference type="HAMAP-Rule" id="MF_01363"/>
    </source>
</evidence>
<evidence type="ECO:0000305" key="2"/>
<dbReference type="EMBL" id="CP000854">
    <property type="protein sequence ID" value="ACC42183.1"/>
    <property type="molecule type" value="Genomic_DNA"/>
</dbReference>
<dbReference type="RefSeq" id="WP_011741441.1">
    <property type="nucleotide sequence ID" value="NC_010612.1"/>
</dbReference>
<dbReference type="SMR" id="B2HMG3"/>
<dbReference type="STRING" id="216594.MMAR_3767"/>
<dbReference type="GeneID" id="34341813"/>
<dbReference type="GeneID" id="93438112"/>
<dbReference type="KEGG" id="mmi:MMAR_3767"/>
<dbReference type="eggNOG" id="COG0261">
    <property type="taxonomic scope" value="Bacteria"/>
</dbReference>
<dbReference type="HOGENOM" id="CLU_061463_3_0_11"/>
<dbReference type="OrthoDB" id="9813334at2"/>
<dbReference type="Proteomes" id="UP000001190">
    <property type="component" value="Chromosome"/>
</dbReference>
<dbReference type="GO" id="GO:0005737">
    <property type="term" value="C:cytoplasm"/>
    <property type="evidence" value="ECO:0007669"/>
    <property type="project" value="UniProtKB-ARBA"/>
</dbReference>
<dbReference type="GO" id="GO:1990904">
    <property type="term" value="C:ribonucleoprotein complex"/>
    <property type="evidence" value="ECO:0007669"/>
    <property type="project" value="UniProtKB-KW"/>
</dbReference>
<dbReference type="GO" id="GO:0005840">
    <property type="term" value="C:ribosome"/>
    <property type="evidence" value="ECO:0007669"/>
    <property type="project" value="UniProtKB-KW"/>
</dbReference>
<dbReference type="GO" id="GO:0019843">
    <property type="term" value="F:rRNA binding"/>
    <property type="evidence" value="ECO:0007669"/>
    <property type="project" value="UniProtKB-UniRule"/>
</dbReference>
<dbReference type="GO" id="GO:0003735">
    <property type="term" value="F:structural constituent of ribosome"/>
    <property type="evidence" value="ECO:0007669"/>
    <property type="project" value="InterPro"/>
</dbReference>
<dbReference type="GO" id="GO:0006412">
    <property type="term" value="P:translation"/>
    <property type="evidence" value="ECO:0007669"/>
    <property type="project" value="UniProtKB-UniRule"/>
</dbReference>
<dbReference type="HAMAP" id="MF_01363">
    <property type="entry name" value="Ribosomal_bL21"/>
    <property type="match status" value="1"/>
</dbReference>
<dbReference type="InterPro" id="IPR028909">
    <property type="entry name" value="bL21-like"/>
</dbReference>
<dbReference type="InterPro" id="IPR036164">
    <property type="entry name" value="bL21-like_sf"/>
</dbReference>
<dbReference type="InterPro" id="IPR001787">
    <property type="entry name" value="Ribosomal_bL21"/>
</dbReference>
<dbReference type="InterPro" id="IPR018258">
    <property type="entry name" value="Ribosomal_bL21_CS"/>
</dbReference>
<dbReference type="NCBIfam" id="TIGR00061">
    <property type="entry name" value="L21"/>
    <property type="match status" value="1"/>
</dbReference>
<dbReference type="PANTHER" id="PTHR21349">
    <property type="entry name" value="50S RIBOSOMAL PROTEIN L21"/>
    <property type="match status" value="1"/>
</dbReference>
<dbReference type="PANTHER" id="PTHR21349:SF0">
    <property type="entry name" value="LARGE RIBOSOMAL SUBUNIT PROTEIN BL21M"/>
    <property type="match status" value="1"/>
</dbReference>
<dbReference type="Pfam" id="PF00829">
    <property type="entry name" value="Ribosomal_L21p"/>
    <property type="match status" value="1"/>
</dbReference>
<dbReference type="SUPFAM" id="SSF141091">
    <property type="entry name" value="L21p-like"/>
    <property type="match status" value="1"/>
</dbReference>
<dbReference type="PROSITE" id="PS01169">
    <property type="entry name" value="RIBOSOMAL_L21"/>
    <property type="match status" value="1"/>
</dbReference>